<accession>A4VWY2</accession>
<feature type="chain" id="PRO_0000303763" description="Exodeoxyribonuclease 7 small subunit">
    <location>
        <begin position="1"/>
        <end position="71"/>
    </location>
</feature>
<keyword id="KW-0963">Cytoplasm</keyword>
<keyword id="KW-0269">Exonuclease</keyword>
<keyword id="KW-0378">Hydrolase</keyword>
<keyword id="KW-0540">Nuclease</keyword>
<organism>
    <name type="scientific">Streptococcus suis (strain 05ZYH33)</name>
    <dbReference type="NCBI Taxonomy" id="391295"/>
    <lineage>
        <taxon>Bacteria</taxon>
        <taxon>Bacillati</taxon>
        <taxon>Bacillota</taxon>
        <taxon>Bacilli</taxon>
        <taxon>Lactobacillales</taxon>
        <taxon>Streptococcaceae</taxon>
        <taxon>Streptococcus</taxon>
    </lineage>
</organism>
<name>EX7S_STRSY</name>
<reference key="1">
    <citation type="journal article" date="2007" name="PLoS ONE">
        <title>A glimpse of streptococcal toxic shock syndrome from comparative genomics of S. suis 2 Chinese isolates.</title>
        <authorList>
            <person name="Chen C."/>
            <person name="Tang J."/>
            <person name="Dong W."/>
            <person name="Wang C."/>
            <person name="Feng Y."/>
            <person name="Wang J."/>
            <person name="Zheng F."/>
            <person name="Pan X."/>
            <person name="Liu D."/>
            <person name="Li M."/>
            <person name="Song Y."/>
            <person name="Zhu X."/>
            <person name="Sun H."/>
            <person name="Feng T."/>
            <person name="Guo Z."/>
            <person name="Ju A."/>
            <person name="Ge J."/>
            <person name="Dong Y."/>
            <person name="Sun W."/>
            <person name="Jiang Y."/>
            <person name="Wang J."/>
            <person name="Yan J."/>
            <person name="Yang H."/>
            <person name="Wang X."/>
            <person name="Gao G.F."/>
            <person name="Yang R."/>
            <person name="Wang J."/>
            <person name="Yu J."/>
        </authorList>
    </citation>
    <scope>NUCLEOTIDE SEQUENCE [LARGE SCALE GENOMIC DNA]</scope>
    <source>
        <strain>05ZYH33</strain>
    </source>
</reference>
<gene>
    <name evidence="1" type="primary">xseB</name>
    <name type="ordered locus">SSU05_1655</name>
</gene>
<sequence>MSKQTKTFEENLAELEGIVTKLERGDVALEEALAEFQKGMVLSKDLQKTLAEAEKTLVKVMQADGSEAEMD</sequence>
<comment type="function">
    <text evidence="1">Bidirectionally degrades single-stranded DNA into large acid-insoluble oligonucleotides, which are then degraded further into small acid-soluble oligonucleotides.</text>
</comment>
<comment type="catalytic activity">
    <reaction evidence="1">
        <text>Exonucleolytic cleavage in either 5'- to 3'- or 3'- to 5'-direction to yield nucleoside 5'-phosphates.</text>
        <dbReference type="EC" id="3.1.11.6"/>
    </reaction>
</comment>
<comment type="subunit">
    <text evidence="1">Heterooligomer composed of large and small subunits.</text>
</comment>
<comment type="subcellular location">
    <subcellularLocation>
        <location evidence="1">Cytoplasm</location>
    </subcellularLocation>
</comment>
<comment type="similarity">
    <text evidence="1">Belongs to the XseB family.</text>
</comment>
<evidence type="ECO:0000255" key="1">
    <source>
        <dbReference type="HAMAP-Rule" id="MF_00337"/>
    </source>
</evidence>
<protein>
    <recommendedName>
        <fullName evidence="1">Exodeoxyribonuclease 7 small subunit</fullName>
        <ecNumber evidence="1">3.1.11.6</ecNumber>
    </recommendedName>
    <alternativeName>
        <fullName evidence="1">Exodeoxyribonuclease VII small subunit</fullName>
        <shortName evidence="1">Exonuclease VII small subunit</shortName>
    </alternativeName>
</protein>
<proteinExistence type="inferred from homology"/>
<dbReference type="EC" id="3.1.11.6" evidence="1"/>
<dbReference type="EMBL" id="CP000407">
    <property type="protein sequence ID" value="ABP90621.1"/>
    <property type="molecule type" value="Genomic_DNA"/>
</dbReference>
<dbReference type="SMR" id="A4VWY2"/>
<dbReference type="STRING" id="391295.SSU05_1655"/>
<dbReference type="KEGG" id="ssu:SSU05_1655"/>
<dbReference type="eggNOG" id="COG1722">
    <property type="taxonomic scope" value="Bacteria"/>
</dbReference>
<dbReference type="HOGENOM" id="CLU_145918_3_2_9"/>
<dbReference type="GO" id="GO:0005829">
    <property type="term" value="C:cytosol"/>
    <property type="evidence" value="ECO:0007669"/>
    <property type="project" value="TreeGrafter"/>
</dbReference>
<dbReference type="GO" id="GO:0009318">
    <property type="term" value="C:exodeoxyribonuclease VII complex"/>
    <property type="evidence" value="ECO:0007669"/>
    <property type="project" value="InterPro"/>
</dbReference>
<dbReference type="GO" id="GO:0008855">
    <property type="term" value="F:exodeoxyribonuclease VII activity"/>
    <property type="evidence" value="ECO:0007669"/>
    <property type="project" value="UniProtKB-UniRule"/>
</dbReference>
<dbReference type="GO" id="GO:0006308">
    <property type="term" value="P:DNA catabolic process"/>
    <property type="evidence" value="ECO:0007669"/>
    <property type="project" value="UniProtKB-UniRule"/>
</dbReference>
<dbReference type="Gene3D" id="1.10.287.1040">
    <property type="entry name" value="Exonuclease VII, small subunit"/>
    <property type="match status" value="1"/>
</dbReference>
<dbReference type="HAMAP" id="MF_00337">
    <property type="entry name" value="Exonuc_7_S"/>
    <property type="match status" value="1"/>
</dbReference>
<dbReference type="InterPro" id="IPR003761">
    <property type="entry name" value="Exonuc_VII_S"/>
</dbReference>
<dbReference type="InterPro" id="IPR037004">
    <property type="entry name" value="Exonuc_VII_ssu_sf"/>
</dbReference>
<dbReference type="NCBIfam" id="NF002138">
    <property type="entry name" value="PRK00977.1-2"/>
    <property type="match status" value="1"/>
</dbReference>
<dbReference type="NCBIfam" id="TIGR01280">
    <property type="entry name" value="xseB"/>
    <property type="match status" value="1"/>
</dbReference>
<dbReference type="PANTHER" id="PTHR34137">
    <property type="entry name" value="EXODEOXYRIBONUCLEASE 7 SMALL SUBUNIT"/>
    <property type="match status" value="1"/>
</dbReference>
<dbReference type="PANTHER" id="PTHR34137:SF1">
    <property type="entry name" value="EXODEOXYRIBONUCLEASE 7 SMALL SUBUNIT"/>
    <property type="match status" value="1"/>
</dbReference>
<dbReference type="Pfam" id="PF02609">
    <property type="entry name" value="Exonuc_VII_S"/>
    <property type="match status" value="1"/>
</dbReference>
<dbReference type="PIRSF" id="PIRSF006488">
    <property type="entry name" value="Exonuc_VII_S"/>
    <property type="match status" value="1"/>
</dbReference>
<dbReference type="SUPFAM" id="SSF116842">
    <property type="entry name" value="XseB-like"/>
    <property type="match status" value="1"/>
</dbReference>